<keyword id="KW-0027">Amidation</keyword>
<keyword id="KW-0044">Antibiotic</keyword>
<keyword id="KW-0929">Antimicrobial</keyword>
<keyword id="KW-0295">Fungicide</keyword>
<keyword id="KW-0391">Immunity</keyword>
<keyword id="KW-0399">Innate immunity</keyword>
<keyword id="KW-0964">Secreted</keyword>
<keyword id="KW-0732">Signal</keyword>
<evidence type="ECO:0000250" key="1">
    <source>
        <dbReference type="UniProtKB" id="P0DQT2"/>
    </source>
</evidence>
<evidence type="ECO:0000255" key="2"/>
<evidence type="ECO:0000269" key="3">
    <source>
    </source>
</evidence>
<evidence type="ECO:0000303" key="4">
    <source>
    </source>
</evidence>
<evidence type="ECO:0000305" key="5"/>
<evidence type="ECO:0000305" key="6">
    <source>
    </source>
</evidence>
<evidence type="ECO:0000312" key="7">
    <source>
        <dbReference type="EMBL" id="JAT91105.1"/>
    </source>
</evidence>
<evidence type="ECO:0000312" key="8">
    <source>
        <dbReference type="EMBL" id="SBQ16530.1"/>
    </source>
</evidence>
<dbReference type="EMBL" id="GEMQ01000084">
    <property type="protein sequence ID" value="JAT91105.1"/>
    <property type="molecule type" value="Transcribed_RNA"/>
</dbReference>
<dbReference type="EMBL" id="GEMQ01000031">
    <property type="protein sequence ID" value="JAT91158.1"/>
    <property type="molecule type" value="Transcribed_RNA"/>
</dbReference>
<dbReference type="EMBL" id="GEMQ01000022">
    <property type="protein sequence ID" value="JAT91167.1"/>
    <property type="molecule type" value="Transcribed_RNA"/>
</dbReference>
<dbReference type="EMBL" id="LT576029">
    <property type="protein sequence ID" value="SBQ16530.1"/>
    <property type="molecule type" value="mRNA"/>
</dbReference>
<dbReference type="SMR" id="A0A1D3IXR7"/>
<dbReference type="GO" id="GO:0005576">
    <property type="term" value="C:extracellular region"/>
    <property type="evidence" value="ECO:0007669"/>
    <property type="project" value="UniProtKB-SubCell"/>
</dbReference>
<dbReference type="GO" id="GO:0042742">
    <property type="term" value="P:defense response to bacterium"/>
    <property type="evidence" value="ECO:0007669"/>
    <property type="project" value="UniProtKB-KW"/>
</dbReference>
<dbReference type="GO" id="GO:0050832">
    <property type="term" value="P:defense response to fungus"/>
    <property type="evidence" value="ECO:0007669"/>
    <property type="project" value="UniProtKB-KW"/>
</dbReference>
<dbReference type="GO" id="GO:0045087">
    <property type="term" value="P:innate immune response"/>
    <property type="evidence" value="ECO:0007669"/>
    <property type="project" value="UniProtKB-KW"/>
</dbReference>
<dbReference type="GO" id="GO:0031640">
    <property type="term" value="P:killing of cells of another organism"/>
    <property type="evidence" value="ECO:0007669"/>
    <property type="project" value="UniProtKB-KW"/>
</dbReference>
<protein>
    <recommendedName>
        <fullName evidence="4">Antimicrobial peptide ToAp1</fullName>
    </recommendedName>
</protein>
<organism>
    <name type="scientific">Tityus obscurus</name>
    <name type="common">Amazonian scorpion</name>
    <name type="synonym">Tityus cambridgei</name>
    <dbReference type="NCBI Taxonomy" id="1221240"/>
    <lineage>
        <taxon>Eukaryota</taxon>
        <taxon>Metazoa</taxon>
        <taxon>Ecdysozoa</taxon>
        <taxon>Arthropoda</taxon>
        <taxon>Chelicerata</taxon>
        <taxon>Arachnida</taxon>
        <taxon>Scorpiones</taxon>
        <taxon>Buthida</taxon>
        <taxon>Buthoidea</taxon>
        <taxon>Buthidae</taxon>
        <taxon>Tityus</taxon>
    </lineage>
</organism>
<comment type="function">
    <text evidence="1 3 6">Antimicrobial peptide. Is able to kill Mycobacterium abscessus subsp. massiliense in a dose-dependent manner (By similarity). Has antifungal activity against Candida spp. and one Cryptococcus neoformans strains with MICs values ranging from 12.5 to 200 uM (PubMed:27917162). Also shows an inhibitory activity on C.albicans biofilms at high concentrations (PubMed:27917162). Shows low cytotoxic activity and has weak hemolytic activity on human erythrocytes (PubMed:27917162). Shows anti-inflammatory activities, since it decreases release of pro-inflammatory cytokines, and increases release of anti-inflammatory cytokines (By similarity). Acts by blocking the Toll-like receptor 4 (TLR4) (By similarity). In addition, decreases the expression of costimulatory molecules such as CD80 and CD86 in LPS-stimulated cells (By similarity). In vivo, does not induce immune cell migration (By similarity). Helical wheel projections predict an amphipathic peptide with distinct hydrophobic and hydrophilic faces (Probable).</text>
</comment>
<comment type="subcellular location">
    <subcellularLocation>
        <location evidence="6">Secreted</location>
    </subcellularLocation>
</comment>
<comment type="tissue specificity">
    <text evidence="6">Expressed by the venom gland.</text>
</comment>
<comment type="miscellaneous">
    <text evidence="3">Negative results: does not show antifungal activity against Candida glabrata (ATCC90030) (MIC&gt;400 uM).</text>
</comment>
<comment type="similarity">
    <text evidence="5">Belongs to the non-disulfide-bridged peptide (NDBP) superfamily. Short antimicrobial peptide (group 4) family.</text>
</comment>
<accession>A0A1D3IXR7</accession>
<sequence length="74" mass="8487">MQMKYLIPIFFLVLIVADHCHAFIGMIPGLIGGLISAFKGRRKRDITAQIEQYRNIQKREAAELEELLANLPVY</sequence>
<proteinExistence type="evidence at protein level"/>
<name>TOAP1_TITOB</name>
<reference evidence="7" key="1">
    <citation type="journal article" date="2018" name="PLoS ONE">
        <title>Proteomic endorsed transcriptomic profiles of venom glands from Tityus obscurus and T. serrulatus scorpions.</title>
        <authorList>
            <person name="de Oliveira U.C."/>
            <person name="Nishiyama M.Y. Jr."/>
            <person name="Dos Santos M.B.V."/>
            <person name="Santos-da-Silva A.P."/>
            <person name="Chalkidis H.M."/>
            <person name="Souza-Imberg A."/>
            <person name="Candido D.M."/>
            <person name="Yamanouye N."/>
            <person name="Dorce V.A.C."/>
            <person name="Junqueira-de-Azevedo I.L.M."/>
        </authorList>
    </citation>
    <scope>NUCLEOTIDE SEQUENCE [MRNA]</scope>
    <source>
        <tissue>Telson</tissue>
    </source>
</reference>
<reference evidence="8" key="2">
    <citation type="journal article" date="2016" name="Front. Microbiol.">
        <title>Activity of scorpion venom-derived antifungal peptides against planktonic cells of Candida spp. and Cryptococcus neoformans and Candida albicans biofilms.</title>
        <authorList>
            <person name="Guilhelmelli F."/>
            <person name="Vilela N."/>
            <person name="Smidt K.S."/>
            <person name="de Oliveira M.A."/>
            <person name="da Cunha Morales Alvares A."/>
            <person name="Rigonatto M.C."/>
            <person name="da Silva Costa P.H."/>
            <person name="Tavares A.H."/>
            <person name="de Freitas S.M."/>
            <person name="Nicola A.M."/>
            <person name="Franco O.L."/>
            <person name="Derengowski L.D."/>
            <person name="Schwartz E.F."/>
            <person name="Mortari M.R."/>
            <person name="Bocca A.L."/>
            <person name="Albuquerque P."/>
            <person name="Silva-Pereira I."/>
        </authorList>
    </citation>
    <scope>NUCLEOTIDE SEQUENCE [MRNA]</scope>
    <scope>SYNTHESIS OF 23-39</scope>
    <scope>PROBABLE AMIDATION AT LYS-39</scope>
    <source>
        <tissue>Venom gland</tissue>
    </source>
</reference>
<feature type="signal peptide" evidence="2">
    <location>
        <begin position="1"/>
        <end position="22"/>
    </location>
</feature>
<feature type="peptide" id="PRO_5013493957" description="Antimicrobial peptide ToAp1" evidence="6">
    <location>
        <begin position="23"/>
        <end position="39"/>
    </location>
</feature>
<feature type="propeptide" id="PRO_0000454900" evidence="6">
    <location>
        <begin position="40"/>
        <end position="74"/>
    </location>
</feature>
<feature type="modified residue" description="Lysine amide" evidence="6">
    <location>
        <position position="39"/>
    </location>
</feature>